<name>TCP11_RAT</name>
<reference key="1">
    <citation type="journal article" date="2004" name="Genome Res.">
        <title>The status, quality, and expansion of the NIH full-length cDNA project: the Mammalian Gene Collection (MGC).</title>
        <authorList>
            <consortium name="The MGC Project Team"/>
        </authorList>
    </citation>
    <scope>NUCLEOTIDE SEQUENCE [LARGE SCALE MRNA]</scope>
    <source>
        <tissue>Testis</tissue>
    </source>
</reference>
<reference key="2">
    <citation type="journal article" date="2012" name="Nat. Commun.">
        <title>Quantitative maps of protein phosphorylation sites across 14 different rat organs and tissues.</title>
        <authorList>
            <person name="Lundby A."/>
            <person name="Secher A."/>
            <person name="Lage K."/>
            <person name="Nordsborg N.B."/>
            <person name="Dmytriyev A."/>
            <person name="Lundby C."/>
            <person name="Olsen J.V."/>
        </authorList>
    </citation>
    <scope>PHOSPHORYLATION [LARGE SCALE ANALYSIS] AT SER-104 AND SER-461</scope>
    <scope>IDENTIFICATION BY MASS SPECTROMETRY [LARGE SCALE ANALYSIS]</scope>
</reference>
<protein>
    <recommendedName>
        <fullName>T-complex protein 11 homolog</fullName>
    </recommendedName>
</protein>
<sequence length="566" mass="62612">MPDLKERAARKEPGAAESASRESRGGNTRESASSAQGHRSRRFNRRSSTAALTPGSAQGRGVQTAPRAPVGHGGLRTGLTSRCPQPSARAKLPSVTRGAPLPPSPGKGHFGATPISHRLGLTERVHDASKLDCHLEDRKSASSLESRGKEVMPSDFWDHLKEQLSAVPPDFSCALELLKEIKEILLSLLLPRQSRLRNEIEEALDMEFLHQQADRGDLNVSYLSKYILNMMVLLCAPVRDEAVQRLENISDPVRLLRGIFQVLGQMKMDMVNYTIQSLQPQLQEHSIQFERAQFQERLNKDPSLLNHTTKWLTQAATQLIAPSGSCYDIQDPSSSSGPSPSDIAIPEPLSPAMVLSQGFLNLLTWDPENEEFPETLLADRSRLQELESQQNQLTILASVLLVASSFSGSVLFGSPQFVDRLKRITKSLVEDFNSRPEEVMQTVSDQVTEEIHQSLKNMGLSPLSSENTDSLIGQLQNIAKKENCVRSVIDQRIHLFLKCCFVLGVQRSLLDLPGGLSLIEAELAELGQKFVSLTHHNQQVFAPYYTEILKTLINPVQTLTTKVGSL</sequence>
<comment type="function">
    <text evidence="1">Plays a role in the process of sperm capacitation and acrosome reactions. Probable receptor for the putative fertilization-promoting peptide (FPP) at the sperm membrane that may modulate the activity of the adenylyl cyclase cAMP pathway.</text>
</comment>
<comment type="subunit">
    <text evidence="1 2">Found in a complex at least composed of MROH2B isoform 2, PRKACA isoform 2 and TCP11. Interacts with MROH2B isoform 2. Interacts with PRKACA isoform 2. Interacts with ODF1 (via leucine zipper motif).</text>
</comment>
<comment type="subcellular location">
    <subcellularLocation>
        <location evidence="5">Membrane</location>
        <topology evidence="5">Single-pass membrane protein</topology>
    </subcellularLocation>
    <subcellularLocation>
        <location evidence="1">Cell projection</location>
        <location evidence="1">Cilium</location>
        <location evidence="1">Flagellum</location>
    </subcellularLocation>
    <subcellularLocation>
        <location evidence="1">Cytoplasmic vesicle</location>
        <location evidence="1">Secretory vesicle</location>
        <location evidence="1">Acrosome</location>
    </subcellularLocation>
    <text evidence="1">Localizes on the acrosomal cap region of acrosome-intact, but not acrosome-reacted sperm. Colocalizes with MROH2B and PRKACA on the acrosome and tail regions in round spermatids and spermatozoa regardless of the capacitation status of the sperm.</text>
</comment>
<comment type="PTM">
    <text evidence="1">Constitutively phosphorylated on serine, threonine and tyrosine residues within the head and tail regions of noncapacitated spermatozoa. Phosphorylation on tyrosine residues increases upon sperm capacitation within the acrosomal region in a protein kinase A (PKA)-dependent signaling pathway.</text>
</comment>
<comment type="similarity">
    <text evidence="5">Belongs to the TCP11 family.</text>
</comment>
<dbReference type="EMBL" id="BC083899">
    <property type="protein sequence ID" value="AAH83899.1"/>
    <property type="molecule type" value="mRNA"/>
</dbReference>
<dbReference type="RefSeq" id="NP_001007696.1">
    <property type="nucleotide sequence ID" value="NM_001007695.1"/>
</dbReference>
<dbReference type="RefSeq" id="XP_017457133.1">
    <property type="nucleotide sequence ID" value="XM_017601644.3"/>
</dbReference>
<dbReference type="SMR" id="Q5XI00"/>
<dbReference type="FunCoup" id="Q5XI00">
    <property type="interactions" value="95"/>
</dbReference>
<dbReference type="STRING" id="10116.ENSRNOP00000039755"/>
<dbReference type="iPTMnet" id="Q5XI00"/>
<dbReference type="PhosphoSitePlus" id="Q5XI00"/>
<dbReference type="PaxDb" id="10116-ENSRNOP00000039755"/>
<dbReference type="Ensembl" id="ENSRNOT00000045044.5">
    <property type="protein sequence ID" value="ENSRNOP00000039755.3"/>
    <property type="gene ID" value="ENSRNOG00000000499.7"/>
</dbReference>
<dbReference type="GeneID" id="309641"/>
<dbReference type="KEGG" id="rno:309641"/>
<dbReference type="UCSC" id="RGD:1359387">
    <property type="organism name" value="rat"/>
</dbReference>
<dbReference type="AGR" id="RGD:1359387"/>
<dbReference type="CTD" id="6954"/>
<dbReference type="RGD" id="1359387">
    <property type="gene designation" value="Tcp11"/>
</dbReference>
<dbReference type="eggNOG" id="KOG1981">
    <property type="taxonomic scope" value="Eukaryota"/>
</dbReference>
<dbReference type="GeneTree" id="ENSGT00940000161869"/>
<dbReference type="HOGENOM" id="CLU_026469_0_0_1"/>
<dbReference type="InParanoid" id="Q5XI00"/>
<dbReference type="OMA" id="QHERATF"/>
<dbReference type="OrthoDB" id="276323at2759"/>
<dbReference type="PhylomeDB" id="Q5XI00"/>
<dbReference type="TreeFam" id="TF313385"/>
<dbReference type="PRO" id="PR:Q5XI00"/>
<dbReference type="Proteomes" id="UP000002494">
    <property type="component" value="Chromosome 20"/>
</dbReference>
<dbReference type="Bgee" id="ENSRNOG00000000499">
    <property type="expression patterns" value="Expressed in testis and 10 other cell types or tissues"/>
</dbReference>
<dbReference type="GO" id="GO:0001669">
    <property type="term" value="C:acrosomal vesicle"/>
    <property type="evidence" value="ECO:0000250"/>
    <property type="project" value="UniProtKB"/>
</dbReference>
<dbReference type="GO" id="GO:0016020">
    <property type="term" value="C:membrane"/>
    <property type="evidence" value="ECO:0007669"/>
    <property type="project" value="UniProtKB-SubCell"/>
</dbReference>
<dbReference type="GO" id="GO:0036126">
    <property type="term" value="C:sperm flagellum"/>
    <property type="evidence" value="ECO:0000250"/>
    <property type="project" value="UniProtKB"/>
</dbReference>
<dbReference type="GO" id="GO:0097225">
    <property type="term" value="C:sperm midpiece"/>
    <property type="evidence" value="ECO:0000250"/>
    <property type="project" value="UniProtKB"/>
</dbReference>
<dbReference type="GO" id="GO:0007189">
    <property type="term" value="P:adenylate cyclase-activating G protein-coupled receptor signaling pathway"/>
    <property type="evidence" value="ECO:0000250"/>
    <property type="project" value="UniProtKB"/>
</dbReference>
<dbReference type="GO" id="GO:0007281">
    <property type="term" value="P:germ cell development"/>
    <property type="evidence" value="ECO:0000266"/>
    <property type="project" value="RGD"/>
</dbReference>
<dbReference type="GO" id="GO:0045920">
    <property type="term" value="P:negative regulation of exocytosis"/>
    <property type="evidence" value="ECO:0000266"/>
    <property type="project" value="RGD"/>
</dbReference>
<dbReference type="GO" id="GO:0010737">
    <property type="term" value="P:protein kinase A signaling"/>
    <property type="evidence" value="ECO:0000250"/>
    <property type="project" value="UniProtKB"/>
</dbReference>
<dbReference type="GO" id="GO:1902490">
    <property type="term" value="P:regulation of sperm capacitation"/>
    <property type="evidence" value="ECO:0000250"/>
    <property type="project" value="UniProtKB"/>
</dbReference>
<dbReference type="GO" id="GO:0007283">
    <property type="term" value="P:spermatogenesis"/>
    <property type="evidence" value="ECO:0007669"/>
    <property type="project" value="UniProtKB-KW"/>
</dbReference>
<dbReference type="InterPro" id="IPR008862">
    <property type="entry name" value="Tcp11"/>
</dbReference>
<dbReference type="PANTHER" id="PTHR12832:SF14">
    <property type="entry name" value="T-COMPLEX PROTEIN 11 HOMOLOG"/>
    <property type="match status" value="1"/>
</dbReference>
<dbReference type="PANTHER" id="PTHR12832">
    <property type="entry name" value="TESTIS-SPECIFIC PROTEIN PBS13 T-COMPLEX 11"/>
    <property type="match status" value="1"/>
</dbReference>
<dbReference type="Pfam" id="PF05794">
    <property type="entry name" value="Tcp11"/>
    <property type="match status" value="1"/>
</dbReference>
<organism>
    <name type="scientific">Rattus norvegicus</name>
    <name type="common">Rat</name>
    <dbReference type="NCBI Taxonomy" id="10116"/>
    <lineage>
        <taxon>Eukaryota</taxon>
        <taxon>Metazoa</taxon>
        <taxon>Chordata</taxon>
        <taxon>Craniata</taxon>
        <taxon>Vertebrata</taxon>
        <taxon>Euteleostomi</taxon>
        <taxon>Mammalia</taxon>
        <taxon>Eutheria</taxon>
        <taxon>Euarchontoglires</taxon>
        <taxon>Glires</taxon>
        <taxon>Rodentia</taxon>
        <taxon>Myomorpha</taxon>
        <taxon>Muroidea</taxon>
        <taxon>Muridae</taxon>
        <taxon>Murinae</taxon>
        <taxon>Rattus</taxon>
    </lineage>
</organism>
<keyword id="KW-0966">Cell projection</keyword>
<keyword id="KW-0969">Cilium</keyword>
<keyword id="KW-0968">Cytoplasmic vesicle</keyword>
<keyword id="KW-0217">Developmental protein</keyword>
<keyword id="KW-0221">Differentiation</keyword>
<keyword id="KW-0282">Flagellum</keyword>
<keyword id="KW-0472">Membrane</keyword>
<keyword id="KW-0597">Phosphoprotein</keyword>
<keyword id="KW-1185">Reference proteome</keyword>
<keyword id="KW-0744">Spermatogenesis</keyword>
<keyword id="KW-0812">Transmembrane</keyword>
<keyword id="KW-1133">Transmembrane helix</keyword>
<proteinExistence type="evidence at protein level"/>
<evidence type="ECO:0000250" key="1">
    <source>
        <dbReference type="UniProtKB" id="Q01755"/>
    </source>
</evidence>
<evidence type="ECO:0000250" key="2">
    <source>
        <dbReference type="UniProtKB" id="Q8WWU5"/>
    </source>
</evidence>
<evidence type="ECO:0000255" key="3"/>
<evidence type="ECO:0000256" key="4">
    <source>
        <dbReference type="SAM" id="MobiDB-lite"/>
    </source>
</evidence>
<evidence type="ECO:0000305" key="5"/>
<evidence type="ECO:0007744" key="6">
    <source>
    </source>
</evidence>
<accession>Q5XI00</accession>
<gene>
    <name type="primary">Tcp11</name>
</gene>
<feature type="chain" id="PRO_0000324299" description="T-complex protein 11 homolog">
    <location>
        <begin position="1"/>
        <end position="566"/>
    </location>
</feature>
<feature type="transmembrane region" description="Helical" evidence="3">
    <location>
        <begin position="393"/>
        <end position="413"/>
    </location>
</feature>
<feature type="region of interest" description="Disordered" evidence="4">
    <location>
        <begin position="1"/>
        <end position="112"/>
    </location>
</feature>
<feature type="region of interest" description="Disordered" evidence="4">
    <location>
        <begin position="328"/>
        <end position="347"/>
    </location>
</feature>
<feature type="compositionally biased region" description="Basic and acidic residues" evidence="4">
    <location>
        <begin position="1"/>
        <end position="24"/>
    </location>
</feature>
<feature type="compositionally biased region" description="Polar residues" evidence="4">
    <location>
        <begin position="25"/>
        <end position="37"/>
    </location>
</feature>
<feature type="compositionally biased region" description="Low complexity" evidence="4">
    <location>
        <begin position="332"/>
        <end position="341"/>
    </location>
</feature>
<feature type="modified residue" description="Phosphoserine" evidence="6">
    <location>
        <position position="104"/>
    </location>
</feature>
<feature type="modified residue" description="Phosphoserine" evidence="6">
    <location>
        <position position="461"/>
    </location>
</feature>